<comment type="function">
    <text evidence="5">Part of the ABC transporter complex LktBD involved in leukotoxin export. Transmembrane domains (TMD) form a pore in the inner membrane and the ATP-binding domain (NBD) is responsible for energy generation (Probable).</text>
</comment>
<comment type="catalytic activity">
    <reaction>
        <text>ATP + H2O + proteinSide 1 = ADP + phosphate + proteinSide 2.</text>
        <dbReference type="EC" id="7.4.2.5"/>
    </reaction>
</comment>
<comment type="subunit">
    <text evidence="1">Homodimer.</text>
</comment>
<comment type="subcellular location">
    <subcellularLocation>
        <location evidence="5">Cell inner membrane</location>
        <topology evidence="5">Multi-pass membrane protein</topology>
    </subcellularLocation>
</comment>
<comment type="domain">
    <text>In LktB the peptidase C39 domain, the ATP-binding domain (NBD) and the transmembrane domain (TMD) are fused.</text>
</comment>
<comment type="similarity">
    <text evidence="5">Belongs to the ABC transporter superfamily. Protein-1 exporter (TC 3.A.1.109) family.</text>
</comment>
<comment type="caution">
    <text evidence="5">Leu-10 is present instead of the conserved Cys which is expected to be the active site residue of peptidase C39. Thus this protein is presumed to be without peptidase activity.</text>
</comment>
<proteinExistence type="inferred from homology"/>
<reference key="1">
    <citation type="journal article" date="2002" name="J. Bacteriol.">
        <title>Mosaic structure and molecular evolution of the leukotoxin operon (lktCABD) in Mannheimia (Pasteurella) haemolytica, Mannheimia glucosida, and Pasteurella trehalosi.</title>
        <authorList>
            <person name="Davies R.L."/>
            <person name="Campbell S."/>
            <person name="Whittam T.S."/>
        </authorList>
    </citation>
    <scope>NUCLEOTIDE SEQUENCE [GENOMIC DNA]</scope>
    <source>
        <strain>Serotype A7 / PH296</strain>
    </source>
</reference>
<protein>
    <recommendedName>
        <fullName>Leukotoxin translocation ATP-binding protein LktB</fullName>
        <ecNumber>7.4.2.5</ecNumber>
    </recommendedName>
</protein>
<sequence>MEANHQRNDLGLVALTMLAQYHNISLNPEEIKHKFDLDGKGLSLTSWLLAAKSLALKAKHIKKEISRLHLVNLPALVWQDNGKHFLLVKVDTDNNRYLTYNLEQDAPQILSQDEFEACYQGQLILVTSRASVVGQLAKFDFTWFIPAVIKYRKIFLETLIVSIFLQIFALITPLFFQVVMDKVLVHRGFSTLNIITVALAIVIIFEIVLSGLRTYVFSHSTSRIDVELGAKLFRHLLSLPISYFENRRVGDTVARVRELDQIRNFLTGQALTSVLDLLFSFIFFAVMWYYSPKLTLVILGSLPCYILWSIFISPILRRRLDDKFARSADNQAFLVESVTAINMIKAMAVAPQMTDTWDKQLASYVSSSFRVTVLATIGQQGVQLIQKTVMVINLWLGAHLVISGDLSIGQLIAFNMLSGQVIAPVIRLAQLWQDFQQVGISVTRLGDVLNSPTEQYQGKLSLPEIKGDISFKNIRFRYKPDAPTILNNVNLEIRQGEVIGIVGRSGSGKSTLTKLLQRFYIPENGQVLIDGHDLALADPNWLRRQIGVVLQDNVLLNRSIRENIALSDPGMPMERVIYAAKLAGAHDFISELREGYNTIVGEQGAGLSGGQRQRIAIARALVNNPKILIFDEATSALDYESEHIIMQNMQKICQGRTVILIAHRLSTVKNADRIIVMEKGEIVEQGKHHELLQNSNGLYSYLHQLQLN</sequence>
<accession>P0C086</accession>
<accession>Q934A3</accession>
<name>LKTB7_MANHA</name>
<evidence type="ECO:0000250" key="1"/>
<evidence type="ECO:0000255" key="2">
    <source>
        <dbReference type="PROSITE-ProRule" id="PRU00362"/>
    </source>
</evidence>
<evidence type="ECO:0000255" key="3">
    <source>
        <dbReference type="PROSITE-ProRule" id="PRU00434"/>
    </source>
</evidence>
<evidence type="ECO:0000255" key="4">
    <source>
        <dbReference type="PROSITE-ProRule" id="PRU00441"/>
    </source>
</evidence>
<evidence type="ECO:0000305" key="5"/>
<organism>
    <name type="scientific">Mannheimia haemolytica</name>
    <name type="common">Pasteurella haemolytica</name>
    <dbReference type="NCBI Taxonomy" id="75985"/>
    <lineage>
        <taxon>Bacteria</taxon>
        <taxon>Pseudomonadati</taxon>
        <taxon>Pseudomonadota</taxon>
        <taxon>Gammaproteobacteria</taxon>
        <taxon>Pasteurellales</taxon>
        <taxon>Pasteurellaceae</taxon>
        <taxon>Mannheimia</taxon>
    </lineage>
</organism>
<dbReference type="EC" id="7.4.2.5"/>
<dbReference type="EMBL" id="AF414141">
    <property type="protein sequence ID" value="AAL13282.1"/>
    <property type="molecule type" value="Genomic_DNA"/>
</dbReference>
<dbReference type="SMR" id="P0C086"/>
<dbReference type="GO" id="GO:0005886">
    <property type="term" value="C:plasma membrane"/>
    <property type="evidence" value="ECO:0007669"/>
    <property type="project" value="UniProtKB-SubCell"/>
</dbReference>
<dbReference type="GO" id="GO:0030256">
    <property type="term" value="C:type I protein secretion system complex"/>
    <property type="evidence" value="ECO:0007669"/>
    <property type="project" value="InterPro"/>
</dbReference>
<dbReference type="GO" id="GO:0140359">
    <property type="term" value="F:ABC-type transporter activity"/>
    <property type="evidence" value="ECO:0007669"/>
    <property type="project" value="InterPro"/>
</dbReference>
<dbReference type="GO" id="GO:0005524">
    <property type="term" value="F:ATP binding"/>
    <property type="evidence" value="ECO:0007669"/>
    <property type="project" value="UniProtKB-KW"/>
</dbReference>
<dbReference type="GO" id="GO:0016887">
    <property type="term" value="F:ATP hydrolysis activity"/>
    <property type="evidence" value="ECO:0007669"/>
    <property type="project" value="InterPro"/>
</dbReference>
<dbReference type="GO" id="GO:0034040">
    <property type="term" value="F:ATPase-coupled lipid transmembrane transporter activity"/>
    <property type="evidence" value="ECO:0007669"/>
    <property type="project" value="TreeGrafter"/>
</dbReference>
<dbReference type="GO" id="GO:0030253">
    <property type="term" value="P:protein secretion by the type I secretion system"/>
    <property type="evidence" value="ECO:0007669"/>
    <property type="project" value="InterPro"/>
</dbReference>
<dbReference type="GO" id="GO:0006508">
    <property type="term" value="P:proteolysis"/>
    <property type="evidence" value="ECO:0007669"/>
    <property type="project" value="InterPro"/>
</dbReference>
<dbReference type="CDD" id="cd18588">
    <property type="entry name" value="ABC_6TM_CyaB_HlyB_like"/>
    <property type="match status" value="1"/>
</dbReference>
<dbReference type="CDD" id="cd03252">
    <property type="entry name" value="ABCC_Hemolysin"/>
    <property type="match status" value="1"/>
</dbReference>
<dbReference type="CDD" id="cd02417">
    <property type="entry name" value="Peptidase_C39_likeA"/>
    <property type="match status" value="1"/>
</dbReference>
<dbReference type="FunFam" id="3.40.50.300:FF:000299">
    <property type="entry name" value="ABC transporter ATP-binding protein/permease"/>
    <property type="match status" value="1"/>
</dbReference>
<dbReference type="FunFam" id="1.20.1560.10:FF:000056">
    <property type="entry name" value="Alpha-hemolysin translocation ATP-binding protein HlyB"/>
    <property type="match status" value="1"/>
</dbReference>
<dbReference type="Gene3D" id="1.20.1560.10">
    <property type="entry name" value="ABC transporter type 1, transmembrane domain"/>
    <property type="match status" value="1"/>
</dbReference>
<dbReference type="Gene3D" id="3.90.70.10">
    <property type="entry name" value="Cysteine proteinases"/>
    <property type="match status" value="1"/>
</dbReference>
<dbReference type="Gene3D" id="3.40.50.300">
    <property type="entry name" value="P-loop containing nucleotide triphosphate hydrolases"/>
    <property type="match status" value="1"/>
</dbReference>
<dbReference type="InterPro" id="IPR003593">
    <property type="entry name" value="AAA+_ATPase"/>
</dbReference>
<dbReference type="InterPro" id="IPR011527">
    <property type="entry name" value="ABC1_TM_dom"/>
</dbReference>
<dbReference type="InterPro" id="IPR036640">
    <property type="entry name" value="ABC1_TM_sf"/>
</dbReference>
<dbReference type="InterPro" id="IPR003439">
    <property type="entry name" value="ABC_transporter-like_ATP-bd"/>
</dbReference>
<dbReference type="InterPro" id="IPR017871">
    <property type="entry name" value="ABC_transporter-like_CS"/>
</dbReference>
<dbReference type="InterPro" id="IPR010132">
    <property type="entry name" value="ATPase_T1SS_HlyB"/>
</dbReference>
<dbReference type="InterPro" id="IPR027417">
    <property type="entry name" value="P-loop_NTPase"/>
</dbReference>
<dbReference type="InterPro" id="IPR005074">
    <property type="entry name" value="Peptidase_C39"/>
</dbReference>
<dbReference type="InterPro" id="IPR039395">
    <property type="entry name" value="Peptidase_C39-like_A"/>
</dbReference>
<dbReference type="InterPro" id="IPR039421">
    <property type="entry name" value="Type_1_exporter"/>
</dbReference>
<dbReference type="NCBIfam" id="TIGR01846">
    <property type="entry name" value="type_I_sec_HlyB"/>
    <property type="match status" value="1"/>
</dbReference>
<dbReference type="PANTHER" id="PTHR24221">
    <property type="entry name" value="ATP-BINDING CASSETTE SUB-FAMILY B"/>
    <property type="match status" value="1"/>
</dbReference>
<dbReference type="PANTHER" id="PTHR24221:SF647">
    <property type="entry name" value="BLL6336 PROTEIN"/>
    <property type="match status" value="1"/>
</dbReference>
<dbReference type="Pfam" id="PF00664">
    <property type="entry name" value="ABC_membrane"/>
    <property type="match status" value="1"/>
</dbReference>
<dbReference type="Pfam" id="PF00005">
    <property type="entry name" value="ABC_tran"/>
    <property type="match status" value="1"/>
</dbReference>
<dbReference type="Pfam" id="PF03412">
    <property type="entry name" value="Peptidase_C39"/>
    <property type="match status" value="1"/>
</dbReference>
<dbReference type="SMART" id="SM00382">
    <property type="entry name" value="AAA"/>
    <property type="match status" value="1"/>
</dbReference>
<dbReference type="SUPFAM" id="SSF90123">
    <property type="entry name" value="ABC transporter transmembrane region"/>
    <property type="match status" value="1"/>
</dbReference>
<dbReference type="SUPFAM" id="SSF52540">
    <property type="entry name" value="P-loop containing nucleoside triphosphate hydrolases"/>
    <property type="match status" value="1"/>
</dbReference>
<dbReference type="PROSITE" id="PS50929">
    <property type="entry name" value="ABC_TM1F"/>
    <property type="match status" value="1"/>
</dbReference>
<dbReference type="PROSITE" id="PS00211">
    <property type="entry name" value="ABC_TRANSPORTER_1"/>
    <property type="match status" value="1"/>
</dbReference>
<dbReference type="PROSITE" id="PS50893">
    <property type="entry name" value="ABC_TRANSPORTER_2"/>
    <property type="match status" value="1"/>
</dbReference>
<dbReference type="PROSITE" id="PS50990">
    <property type="entry name" value="PEPTIDASE_C39"/>
    <property type="match status" value="1"/>
</dbReference>
<keyword id="KW-0067">ATP-binding</keyword>
<keyword id="KW-0997">Cell inner membrane</keyword>
<keyword id="KW-1003">Cell membrane</keyword>
<keyword id="KW-0472">Membrane</keyword>
<keyword id="KW-0547">Nucleotide-binding</keyword>
<keyword id="KW-1278">Translocase</keyword>
<keyword id="KW-0812">Transmembrane</keyword>
<keyword id="KW-1133">Transmembrane helix</keyword>
<keyword id="KW-0813">Transport</keyword>
<feature type="chain" id="PRO_0000092383" description="Leukotoxin translocation ATP-binding protein LktB">
    <location>
        <begin position="1"/>
        <end position="708"/>
    </location>
</feature>
<feature type="transmembrane region" description="Helical" evidence="4">
    <location>
        <begin position="159"/>
        <end position="179"/>
    </location>
</feature>
<feature type="transmembrane region" description="Helical" evidence="4">
    <location>
        <begin position="192"/>
        <end position="212"/>
    </location>
</feature>
<feature type="transmembrane region" description="Helical" evidence="4">
    <location>
        <begin position="270"/>
        <end position="290"/>
    </location>
</feature>
<feature type="transmembrane region" description="Helical" evidence="4">
    <location>
        <begin position="296"/>
        <end position="316"/>
    </location>
</feature>
<feature type="transmembrane region" description="Helical" evidence="4">
    <location>
        <begin position="389"/>
        <end position="409"/>
    </location>
</feature>
<feature type="domain" description="Peptidase C39" evidence="2">
    <location>
        <begin position="1"/>
        <end position="126"/>
    </location>
</feature>
<feature type="domain" description="ABC transmembrane type-1" evidence="4">
    <location>
        <begin position="155"/>
        <end position="437"/>
    </location>
</feature>
<feature type="domain" description="ABC transporter" evidence="2 3">
    <location>
        <begin position="469"/>
        <end position="704"/>
    </location>
</feature>
<feature type="binding site" evidence="2 3">
    <location>
        <begin position="503"/>
        <end position="510"/>
    </location>
    <ligand>
        <name>ATP</name>
        <dbReference type="ChEBI" id="CHEBI:30616"/>
    </ligand>
</feature>
<gene>
    <name type="primary">lktB</name>
</gene>